<comment type="function">
    <molecule>NS2</molecule>
    <text evidence="2 4">Together with NTPase and NS4, initiates the formation of the replication complex (By similarity). Induces the proliferation of the host smooth ER membranes forming long tubular structures (By similarity). These remodeled membranes probably form the viral factories that contain the replication complex (By similarity).</text>
</comment>
<comment type="function">
    <molecule>NTPase</molecule>
    <text evidence="2 3 4">Displays NTPase activity, but no helicase activity (By similarity). Induces the formation of convoluted membranes derived from the host ER (By similarity). These remodeled membranes probably form the viral factories that contain the replication complex (By similarity). Together with NS2 and NS4, initiates the formation of the replication complex (By similarity).</text>
</comment>
<comment type="function">
    <molecule>NS4</molecule>
    <text evidence="2 4">Probable key protein responsible for the formation of membrane alterations by the virus (By similarity). Induces the formation of convoluted membranes derived from the host ER (By similarity). These remodeled membranes probably form the viral factories that contain the replication complex (By similarity). Together with NS2 and NTPase, initiates the formation of the replication complex (By similarity).</text>
</comment>
<comment type="function">
    <molecule>Viral genome-linked protein</molecule>
    <text evidence="1">Viral genome-linked protein is covalently linked to the 5'-end of the positive-strand, negative-strand genomic RNAs and subgenomic RNA. Acts as a genome-linked replication primer. May recruit ribosome to viral RNA thereby promoting viral proteins translation. Interacts with host translation initiation complex to allow the translation of viral proteins.</text>
</comment>
<comment type="function">
    <molecule>Protease-polymerase p76</molecule>
    <text evidence="4 11">Protease-polymerase p76 processes the polyprotein: Pro-Pol is first released by autocleavage, then all other proteins are cleaved (By similarity). Cleaves host translation initiation factor eIF4G1, eIF4G2 and PABP1 thereby inducing a shutdown of host protein synthesis (By similarity). This shutdown may not prevent viral mRNA from being translated since viral Vpg replaces the cap (By similarity). Also functions as an RNA-directed RNA polymerase, which replicates genomic and antigenomic viral RNA by recognizing specific signals (Probable). Also transcribes a subgenomic mRNA by initiating RNA synthesis internally on antigenomic RNA (Probable). This sgRNA codes for structural proteins (Probable). Catalyzes the covalent attachment VPg with viral RNAs (By similarity).</text>
</comment>
<comment type="catalytic activity">
    <molecule>NTPase</molecule>
    <reaction evidence="3">
        <text>a ribonucleoside 5'-triphosphate + H2O = a ribonucleoside 5'-diphosphate + phosphate + H(+)</text>
        <dbReference type="Rhea" id="RHEA:23680"/>
        <dbReference type="ChEBI" id="CHEBI:15377"/>
        <dbReference type="ChEBI" id="CHEBI:15378"/>
        <dbReference type="ChEBI" id="CHEBI:43474"/>
        <dbReference type="ChEBI" id="CHEBI:57930"/>
        <dbReference type="ChEBI" id="CHEBI:61557"/>
        <dbReference type="EC" id="3.6.1.15"/>
    </reaction>
</comment>
<comment type="catalytic activity">
    <molecule>Protease-polymerase p76</molecule>
    <reaction evidence="7">
        <text>RNA(n) + a ribonucleoside 5'-triphosphate = RNA(n+1) + diphosphate</text>
        <dbReference type="Rhea" id="RHEA:21248"/>
        <dbReference type="Rhea" id="RHEA-COMP:14527"/>
        <dbReference type="Rhea" id="RHEA-COMP:17342"/>
        <dbReference type="ChEBI" id="CHEBI:33019"/>
        <dbReference type="ChEBI" id="CHEBI:61557"/>
        <dbReference type="ChEBI" id="CHEBI:140395"/>
        <dbReference type="EC" id="2.7.7.48"/>
    </reaction>
</comment>
<comment type="catalytic activity">
    <molecule>Protease-polymerase p76</molecule>
    <reaction evidence="9">
        <text>Endopeptidase with a preference for cleavage when the P1 position is occupied by Glu-|-Xaa and the P1' position is occupied by Gly-|-Yaa.</text>
        <dbReference type="EC" id="3.4.22.66"/>
    </reaction>
</comment>
<comment type="subunit">
    <molecule>NS2</molecule>
    <text evidence="4">Homodimer (By similarity). Interacts with NTPase, protein p30 and protease-polymerase p76 (By similarity).</text>
</comment>
<comment type="subunit">
    <molecule>Viral genome-linked protein</molecule>
    <text evidence="1 4">Interacts with capsid protein VP1 and protease-polymerase p76 (By similarity). Interacts with host IEF4e; this interaction plays a role in translation of viral proteins (By similarity).</text>
</comment>
<comment type="subunit">
    <molecule>Protease-polymerase p76</molecule>
    <text evidence="4">Homooligomer (By similarity). Interacts with Vpg, protein p32 and may interact with capsid protein VP1 (By similarity).</text>
</comment>
<comment type="subcellular location">
    <molecule>NS2</molecule>
    <subcellularLocation>
        <location evidence="4">Host endoplasmic reticulum membrane</location>
    </subcellularLocation>
</comment>
<comment type="subcellular location">
    <molecule>NS4</molecule>
    <subcellularLocation>
        <location evidence="4">Host endoplasmic reticulum membrane</location>
    </subcellularLocation>
</comment>
<comment type="subcellular location">
    <molecule>NTPase</molecule>
    <subcellularLocation>
        <location evidence="4">Host endoplasmic reticulum membrane</location>
    </subcellularLocation>
</comment>
<comment type="domain">
    <molecule>Viral genome-linked protein</molecule>
    <text evidence="1">Contains a compact core domain in the N-terminus half that is composed of a three-helix bundle.</text>
</comment>
<comment type="domain">
    <molecule>Protease-polymerase p76</molecule>
    <text evidence="11">Protease-polymerase is composed of two domains displaying two different catalytic activity. These activities may act independently.</text>
</comment>
<comment type="PTM">
    <molecule>Genome polyprotein</molecule>
    <text evidence="4">Specific enzymatic cleavages in vivo yield mature proteins (By similarity). Pro-Pol is first autocatalytically cleaved, then processes the whole polyprotein (By similarity).</text>
</comment>
<comment type="PTM">
    <molecule>Viral genome-linked protein</molecule>
    <text evidence="4">VPg is uridylylated by the polymerase and is covalently attached to the 5'-end of the polyadenylated genomic and subgenomic RNAs. This uridylylated form acts as a nucleotide-peptide primer for the polymerase.</text>
</comment>
<reference key="1">
    <citation type="journal article" date="1998" name="Virus Res.">
        <title>The capsid protein of vesicular exanthema of swine virus serotype A48: relationship to the capsid protein of other animal caliciviruses.</title>
        <authorList>
            <person name="Neill J.D."/>
            <person name="Meyer R.F."/>
            <person name="Seal B.S."/>
        </authorList>
    </citation>
    <scope>NUCLEOTIDE SEQUENCE [GENOMIC RNA]</scope>
</reference>
<reference key="2">
    <citation type="submission" date="2000-08" db="EMBL/GenBank/DDBJ databases">
        <title>Complete nucleotide sequence of the genomic RNA of vesicular exanthema of swine virus A48.</title>
        <authorList>
            <person name="Neill J.D."/>
            <person name="Seal B.S."/>
            <person name="Ridpath J.F."/>
        </authorList>
    </citation>
    <scope>NUCLEOTIDE SEQUENCE [GENOMIC RNA]</scope>
</reference>
<reference key="3">
    <citation type="journal article" date="2021" name="Front. Microbiol.">
        <title>Calicivirus Non-structural Proteins: Potential Functions in Replication and Host Cell Manipulation.</title>
        <authorList>
            <person name="Smertina E."/>
            <person name="Hall R.N."/>
            <person name="Urakova N."/>
            <person name="Strive T."/>
            <person name="Frese M."/>
        </authorList>
    </citation>
    <scope>REVIEW</scope>
</reference>
<feature type="chain" id="PRO_0000402456" description="Genome polyprotein">
    <location>
        <begin position="1"/>
        <end position="1881"/>
    </location>
</feature>
<feature type="chain" id="PRO_0000402457" description="NS1">
    <location>
        <begin position="1"/>
        <end position="148"/>
    </location>
</feature>
<feature type="chain" id="PRO_0000402458" description="NS2">
    <location>
        <begin position="149"/>
        <end position="435"/>
    </location>
</feature>
<feature type="chain" id="PRO_0000402459" description="NTPase">
    <location>
        <begin position="436"/>
        <end position="791"/>
    </location>
</feature>
<feature type="chain" id="PRO_0000402460" description="NS4">
    <location>
        <begin position="792"/>
        <end position="1070"/>
    </location>
</feature>
<feature type="chain" id="PRO_0000402461" description="Viral genome-linked protein">
    <location>
        <begin position="1071"/>
        <end position="1183"/>
    </location>
</feature>
<feature type="chain" id="PRO_0000402462" description="Protease-polymerase p76">
    <location>
        <begin position="1184"/>
        <end position="1881"/>
    </location>
</feature>
<feature type="domain" description="SF3 helicase" evidence="8">
    <location>
        <begin position="564"/>
        <end position="720"/>
    </location>
</feature>
<feature type="domain" description="Peptidase C24" evidence="9">
    <location>
        <begin position="1188"/>
        <end position="1341"/>
    </location>
</feature>
<feature type="domain" description="RdRp catalytic" evidence="7">
    <location>
        <begin position="1593"/>
        <end position="1718"/>
    </location>
</feature>
<feature type="region of interest" description="Disordered" evidence="10">
    <location>
        <begin position="1"/>
        <end position="93"/>
    </location>
</feature>
<feature type="compositionally biased region" description="Polar residues" evidence="10">
    <location>
        <begin position="1"/>
        <end position="16"/>
    </location>
</feature>
<feature type="compositionally biased region" description="Basic and acidic residues" evidence="10">
    <location>
        <begin position="37"/>
        <end position="50"/>
    </location>
</feature>
<feature type="active site" description="For 3CLpro activity" evidence="9">
    <location>
        <position position="1222"/>
    </location>
</feature>
<feature type="active site" description="For 3CLpro activity" evidence="9">
    <location>
        <position position="1243"/>
    </location>
</feature>
<feature type="active site" description="For 3CLpro activity" evidence="9">
    <location>
        <position position="1305"/>
    </location>
</feature>
<feature type="binding site" evidence="8">
    <location>
        <begin position="590"/>
        <end position="597"/>
    </location>
    <ligand>
        <name>ATP</name>
        <dbReference type="ChEBI" id="CHEBI:30616"/>
    </ligand>
</feature>
<feature type="site" description="Cleavage; by Pro-Pol" evidence="4">
    <location>
        <begin position="148"/>
        <end position="149"/>
    </location>
</feature>
<feature type="site" description="Cleavage; by Pro-Pol" evidence="4">
    <location>
        <begin position="435"/>
        <end position="436"/>
    </location>
</feature>
<feature type="site" description="Cleavage; by Pro-Pol" evidence="4">
    <location>
        <begin position="791"/>
        <end position="792"/>
    </location>
</feature>
<feature type="site" description="Cleavage; by Pro-Pol" evidence="4">
    <location>
        <begin position="1070"/>
        <end position="1071"/>
    </location>
</feature>
<feature type="site" description="Cleavage; by Pro-Pol" evidence="4">
    <location>
        <begin position="1183"/>
        <end position="1184"/>
    </location>
</feature>
<feature type="modified residue" description="O-(5'-phospho-RNA)-tyrosine" evidence="1">
    <location>
        <position position="1093"/>
    </location>
</feature>
<evidence type="ECO:0000250" key="1">
    <source>
        <dbReference type="UniProtKB" id="P27409"/>
    </source>
</evidence>
<evidence type="ECO:0000250" key="2">
    <source>
        <dbReference type="UniProtKB" id="P54634"/>
    </source>
</evidence>
<evidence type="ECO:0000250" key="3">
    <source>
        <dbReference type="UniProtKB" id="Q04544"/>
    </source>
</evidence>
<evidence type="ECO:0000250" key="4">
    <source>
        <dbReference type="UniProtKB" id="Q66914"/>
    </source>
</evidence>
<evidence type="ECO:0000250" key="5">
    <source>
        <dbReference type="UniProtKB" id="Q69014"/>
    </source>
</evidence>
<evidence type="ECO:0000250" key="6">
    <source>
        <dbReference type="UniProtKB" id="Q6XDK8"/>
    </source>
</evidence>
<evidence type="ECO:0000255" key="7">
    <source>
        <dbReference type="PROSITE-ProRule" id="PRU00539"/>
    </source>
</evidence>
<evidence type="ECO:0000255" key="8">
    <source>
        <dbReference type="PROSITE-ProRule" id="PRU00551"/>
    </source>
</evidence>
<evidence type="ECO:0000255" key="9">
    <source>
        <dbReference type="PROSITE-ProRule" id="PRU01242"/>
    </source>
</evidence>
<evidence type="ECO:0000256" key="10">
    <source>
        <dbReference type="SAM" id="MobiDB-lite"/>
    </source>
</evidence>
<evidence type="ECO:0000305" key="11"/>
<dbReference type="EC" id="3.6.1.15" evidence="3"/>
<dbReference type="EC" id="2.7.7.48" evidence="5"/>
<dbReference type="EC" id="3.4.22.66" evidence="6"/>
<dbReference type="EMBL" id="U76874">
    <property type="protein sequence ID" value="AAG13641.1"/>
    <property type="molecule type" value="Genomic_RNA"/>
</dbReference>
<dbReference type="RefSeq" id="NP_066255.1">
    <property type="nucleotide sequence ID" value="NC_002551.1"/>
</dbReference>
<dbReference type="SMR" id="Q9DUN3"/>
<dbReference type="KEGG" id="vg:911834"/>
<dbReference type="Proteomes" id="UP000007661">
    <property type="component" value="Segment"/>
</dbReference>
<dbReference type="GO" id="GO:0044167">
    <property type="term" value="C:host cell endoplasmic reticulum membrane"/>
    <property type="evidence" value="ECO:0007669"/>
    <property type="project" value="UniProtKB-SubCell"/>
</dbReference>
<dbReference type="GO" id="GO:0016020">
    <property type="term" value="C:membrane"/>
    <property type="evidence" value="ECO:0007669"/>
    <property type="project" value="UniProtKB-KW"/>
</dbReference>
<dbReference type="GO" id="GO:0005524">
    <property type="term" value="F:ATP binding"/>
    <property type="evidence" value="ECO:0007669"/>
    <property type="project" value="UniProtKB-KW"/>
</dbReference>
<dbReference type="GO" id="GO:0016887">
    <property type="term" value="F:ATP hydrolysis activity"/>
    <property type="evidence" value="ECO:0007669"/>
    <property type="project" value="InterPro"/>
</dbReference>
<dbReference type="GO" id="GO:0004197">
    <property type="term" value="F:cysteine-type endopeptidase activity"/>
    <property type="evidence" value="ECO:0007669"/>
    <property type="project" value="InterPro"/>
</dbReference>
<dbReference type="GO" id="GO:0003723">
    <property type="term" value="F:RNA binding"/>
    <property type="evidence" value="ECO:0007669"/>
    <property type="project" value="InterPro"/>
</dbReference>
<dbReference type="GO" id="GO:0003724">
    <property type="term" value="F:RNA helicase activity"/>
    <property type="evidence" value="ECO:0007669"/>
    <property type="project" value="InterPro"/>
</dbReference>
<dbReference type="GO" id="GO:0003968">
    <property type="term" value="F:RNA-directed RNA polymerase activity"/>
    <property type="evidence" value="ECO:0007669"/>
    <property type="project" value="UniProtKB-KW"/>
</dbReference>
<dbReference type="GO" id="GO:0006351">
    <property type="term" value="P:DNA-templated transcription"/>
    <property type="evidence" value="ECO:0007669"/>
    <property type="project" value="InterPro"/>
</dbReference>
<dbReference type="GO" id="GO:0006508">
    <property type="term" value="P:proteolysis"/>
    <property type="evidence" value="ECO:0007669"/>
    <property type="project" value="UniProtKB-KW"/>
</dbReference>
<dbReference type="GO" id="GO:0039694">
    <property type="term" value="P:viral RNA genome replication"/>
    <property type="evidence" value="ECO:0007669"/>
    <property type="project" value="InterPro"/>
</dbReference>
<dbReference type="CDD" id="cd00009">
    <property type="entry name" value="AAA"/>
    <property type="match status" value="1"/>
</dbReference>
<dbReference type="CDD" id="cd23192">
    <property type="entry name" value="Caliciviridae_RdRp"/>
    <property type="match status" value="1"/>
</dbReference>
<dbReference type="Gene3D" id="1.10.260.110">
    <property type="match status" value="1"/>
</dbReference>
<dbReference type="Gene3D" id="1.20.960.20">
    <property type="match status" value="1"/>
</dbReference>
<dbReference type="Gene3D" id="3.30.70.270">
    <property type="match status" value="2"/>
</dbReference>
<dbReference type="Gene3D" id="6.10.250.3230">
    <property type="match status" value="1"/>
</dbReference>
<dbReference type="Gene3D" id="3.40.50.300">
    <property type="entry name" value="P-loop containing nucleotide triphosphate hydrolases"/>
    <property type="match status" value="1"/>
</dbReference>
<dbReference type="InterPro" id="IPR003593">
    <property type="entry name" value="AAA+_ATPase"/>
</dbReference>
<dbReference type="InterPro" id="IPR016024">
    <property type="entry name" value="ARM-type_fold"/>
</dbReference>
<dbReference type="InterPro" id="IPR043502">
    <property type="entry name" value="DNA/RNA_pol_sf"/>
</dbReference>
<dbReference type="InterPro" id="IPR004004">
    <property type="entry name" value="Helic/Pol/Pept_Calicivir-typ"/>
</dbReference>
<dbReference type="InterPro" id="IPR000605">
    <property type="entry name" value="Helicase_SF3_ssDNA/RNA_vir"/>
</dbReference>
<dbReference type="InterPro" id="IPR014759">
    <property type="entry name" value="Helicase_SF3_ssRNA_vir"/>
</dbReference>
<dbReference type="InterPro" id="IPR027417">
    <property type="entry name" value="P-loop_NTPase"/>
</dbReference>
<dbReference type="InterPro" id="IPR000317">
    <property type="entry name" value="Peptidase_C24"/>
</dbReference>
<dbReference type="InterPro" id="IPR009003">
    <property type="entry name" value="Peptidase_S1_PA"/>
</dbReference>
<dbReference type="InterPro" id="IPR043128">
    <property type="entry name" value="Rev_trsase/Diguanyl_cyclase"/>
</dbReference>
<dbReference type="InterPro" id="IPR001205">
    <property type="entry name" value="RNA-dir_pol_C"/>
</dbReference>
<dbReference type="InterPro" id="IPR007094">
    <property type="entry name" value="RNA-dir_pol_PSvirus"/>
</dbReference>
<dbReference type="InterPro" id="IPR049434">
    <property type="entry name" value="VPg"/>
</dbReference>
<dbReference type="Pfam" id="PF03510">
    <property type="entry name" value="Peptidase_C24"/>
    <property type="match status" value="1"/>
</dbReference>
<dbReference type="Pfam" id="PF00680">
    <property type="entry name" value="RdRP_1"/>
    <property type="match status" value="1"/>
</dbReference>
<dbReference type="Pfam" id="PF00910">
    <property type="entry name" value="RNA_helicase"/>
    <property type="match status" value="1"/>
</dbReference>
<dbReference type="Pfam" id="PF20915">
    <property type="entry name" value="VPg"/>
    <property type="match status" value="1"/>
</dbReference>
<dbReference type="PRINTS" id="PR00916">
    <property type="entry name" value="2CENDOPTASE"/>
</dbReference>
<dbReference type="PRINTS" id="PR00918">
    <property type="entry name" value="CALICVIRUSNS"/>
</dbReference>
<dbReference type="SMART" id="SM00382">
    <property type="entry name" value="AAA"/>
    <property type="match status" value="1"/>
</dbReference>
<dbReference type="SUPFAM" id="SSF48371">
    <property type="entry name" value="ARM repeat"/>
    <property type="match status" value="1"/>
</dbReference>
<dbReference type="SUPFAM" id="SSF56672">
    <property type="entry name" value="DNA/RNA polymerases"/>
    <property type="match status" value="1"/>
</dbReference>
<dbReference type="SUPFAM" id="SSF52540">
    <property type="entry name" value="P-loop containing nucleoside triphosphate hydrolases"/>
    <property type="match status" value="1"/>
</dbReference>
<dbReference type="SUPFAM" id="SSF50494">
    <property type="entry name" value="Trypsin-like serine proteases"/>
    <property type="match status" value="1"/>
</dbReference>
<dbReference type="PROSITE" id="PS51894">
    <property type="entry name" value="CV_3CL_PRO"/>
    <property type="match status" value="1"/>
</dbReference>
<dbReference type="PROSITE" id="PS50507">
    <property type="entry name" value="RDRP_SSRNA_POS"/>
    <property type="match status" value="1"/>
</dbReference>
<dbReference type="PROSITE" id="PS51218">
    <property type="entry name" value="SF3_HELICASE_2"/>
    <property type="match status" value="1"/>
</dbReference>
<organism>
    <name type="scientific">Vesicular exanthema of swine virus serotype A48 (isolate Swine/United States/A48/1948)</name>
    <name type="common">VESV</name>
    <dbReference type="NCBI Taxonomy" id="85617"/>
    <lineage>
        <taxon>Viruses</taxon>
        <taxon>Riboviria</taxon>
        <taxon>Orthornavirae</taxon>
        <taxon>Pisuviricota</taxon>
        <taxon>Pisoniviricetes</taxon>
        <taxon>Picornavirales</taxon>
        <taxon>Caliciviridae</taxon>
        <taxon>Vesivirus</taxon>
        <taxon>Vesicular exanthema of swine virus</taxon>
    </lineage>
</organism>
<name>POLG_VESVA</name>
<accession>Q9DUN3</accession>
<protein>
    <recommendedName>
        <fullName>Genome polyprotein</fullName>
    </recommendedName>
    <component>
        <recommendedName>
            <fullName>NS1</fullName>
        </recommendedName>
        <alternativeName>
            <fullName>Protein p16</fullName>
        </alternativeName>
    </component>
    <component>
        <recommendedName>
            <fullName>NS2</fullName>
        </recommendedName>
        <alternativeName>
            <fullName>Protein p32</fullName>
        </alternativeName>
    </component>
    <component>
        <recommendedName>
            <fullName>NTPase</fullName>
            <ecNumber evidence="3">3.6.1.15</ecNumber>
        </recommendedName>
        <alternativeName>
            <fullName evidence="11">NS3</fullName>
        </alternativeName>
        <alternativeName>
            <fullName>p39</fullName>
        </alternativeName>
    </component>
    <component>
        <recommendedName>
            <fullName evidence="11">NS4</fullName>
        </recommendedName>
        <alternativeName>
            <fullName evidence="1">3A-like protein p30</fullName>
        </alternativeName>
        <alternativeName>
            <fullName>Protein p30</fullName>
        </alternativeName>
    </component>
    <component>
        <recommendedName>
            <fullName>Viral genome-linked protein</fullName>
            <shortName>VPg</shortName>
        </recommendedName>
        <alternativeName>
            <fullName evidence="11">NS5</fullName>
        </alternativeName>
        <alternativeName>
            <fullName>p13</fullName>
        </alternativeName>
    </component>
    <component>
        <recommendedName>
            <fullName>Protease-polymerase p76</fullName>
            <shortName>Pro-Pol</shortName>
            <ecNumber evidence="5">2.7.7.48</ecNumber>
            <ecNumber evidence="6">3.4.22.66</ecNumber>
        </recommendedName>
        <alternativeName>
            <fullName evidence="11">NS6-7</fullName>
        </alternativeName>
    </component>
</protein>
<organismHost>
    <name type="scientific">Sus scrofa</name>
    <name type="common">Pig</name>
    <dbReference type="NCBI Taxonomy" id="9823"/>
</organismHost>
<gene>
    <name type="ORF">ORF1</name>
</gene>
<sequence length="1881" mass="208813">MAQTLSKISNKENASSGLRPKRFKPHQPIPTWMVRCEPLDHDSRRGRDPVRASPQAKRVRTPTPYPRHLKPAASAVVRSGNNPSHLKPASTDVVRSGPQPLCCEAKDGGVVRSCKTYNLKPAHESKAVAFSLPKTDGPTGNEPEFIAEACPSCALYDTCPNCTSKVINDDGSTDGTIPSWDQIETTPAFLSLLSNTDEEMSADELTNLAAHLRKAFETGSHPANVDYSKDQLQGLLEMAEAAVPPARRQTLPFYQQRLEARRTWREKIFNQPLEEINKILTTSKDRFQRCAAWKVILEKAVLAKEYGEEAYAYAQQALKNINSFDVNLVLKMAAATFIDHIRMMTVDNPDLVSYIPKLIVKLKPLTLKMIIDNHENTKEGWLVTLTSLAELYGMVEVAIDFVPTVVGKLFDLLMKTTSKMYSMFKSVVLATFTSESLDFTNPFWYAIAAILCFLITGAIPHNGKMKIHKNILSNATGIVAGIKAIQALAAMFSTWSNERLVNDLSSRTIALTELNNPTITADIDAVINLQRLAEVLRDEVKSHTLNPLMQPYNPILRNLMSALDKVISCCTRRKAIATKRTAPVAVILTGPPGCGKTTAAFALAKRLSQQKPSIISLDVDHHDTYTGNEVCIIDEFDSSDKVDYANFVVNMVNTNPMVLNCDLIENKGKTFTSKYVIMTSNTETPVKPTSRRAGAFYRRVMIVDVTNNAVDKWKSDNPGKAVPKWCFNKDFSHLSLSLRGTEPYSKEYVLDPTGRNHQSRRAPPPQQITLEQLAQKMVVQHTTNTSEFVTQAGDVPVFGFVCQNNEIDTVYNLLAAVKARYGANFNLYKGMVRTAHENSGCGAHVHVISREDNFRGKAFTVNRSRLESVPHLEGDSFRRSLGVVMSDKDVTTMFYYIKGKVINDQVSLTELPANQHVVTVHTVYDMAWALRRHLKWSGQWQLIKAAYEIMCYPDTAACALRNWMDSTDFSEEHVVTQFIAPGGTIILESCYGARMWATGQRLIRAGGLTEAGGPQGGVRFAGLGARNVPWSEILREFMTLISHIWSQIKGATVVLTALTFYLKRFRPRVEAKGKNKNKGPRKNTGVALTDDEYNDWKQSKAEKNLDLTVKDFLQLRHRAAMGADNTDAVKFRYWYSKKQKIYHDLENFPIIGRGGLKRELIRKGPLRPRGNDFYDEPDDWYSEGVIDGVTHKNAIVSVDDVDGMHKGYAIHIGHGVYISLKHVLTGNARILSEEPKGITISGELATFRLNNILPTAVPVGTNKPIKDPWGNPVSTDWQFKNYNTTSGNIYGACGSSCSLTRQGDCGLPYVDDHGVVVGLHAGSGGDKCPSRKLIVPYVKVDMRIRDTCTKESPTKTHKPTFSYRGLLGKETGEPRTIMKGTRLHVSPAHVDDYEECTHQPASLGAGDPRCPISLTGIMVNNLQPYTEASPGPDTATLNRVSKMLTSHMEGYVPKVHKTEEDSISAFYMLNHDTLCGPYIGARKKDHVKDGVLDKNLLDLLSSKWNRAKLGLALPHEYALGLKDELRPKDKVAVGKRRLIWGCDVGVSTVCAAAFKRVSESIMANHALGFIQVGINMDGPAVEDLFKRLERPKHDRYCVDYSKWDSTQPPKVTSQSIDILRHFTDKSPIVDSACATLKSNPIGIFNGVAFKVAGGLPSGMPLTSIINSLNHCLMVGSAVVKALEDSGVRVTWNIFDSMDLFTYGDDGVYIVPPLISSVMPKVFANLRQFGLKPTRTDKSDAEITPIPADEPVEFLKRTIVRTENGVRALLDRSSIIRQFYYIKAENTENWTVPPKRIDTPSRGQQLYNACLYASQHGEEFYTSKIVPLIERAVKLEGLHIEVPEFHQAVAAYNGYFNGTEGQPNQIAHASGGLGLSGEVFEN</sequence>
<keyword id="KW-0067">ATP-binding</keyword>
<keyword id="KW-0191">Covalent protein-RNA linkage</keyword>
<keyword id="KW-1038">Host endoplasmic reticulum</keyword>
<keyword id="KW-1043">Host membrane</keyword>
<keyword id="KW-0378">Hydrolase</keyword>
<keyword id="KW-0472">Membrane</keyword>
<keyword id="KW-0547">Nucleotide-binding</keyword>
<keyword id="KW-0548">Nucleotidyltransferase</keyword>
<keyword id="KW-0597">Phosphoprotein</keyword>
<keyword id="KW-0645">Protease</keyword>
<keyword id="KW-1185">Reference proteome</keyword>
<keyword id="KW-0696">RNA-directed RNA polymerase</keyword>
<keyword id="KW-0788">Thiol protease</keyword>
<keyword id="KW-0808">Transferase</keyword>
<keyword id="KW-0693">Viral RNA replication</keyword>
<proteinExistence type="inferred from homology"/>